<evidence type="ECO:0000255" key="1">
    <source>
        <dbReference type="HAMAP-Rule" id="MF_00685"/>
    </source>
</evidence>
<comment type="function">
    <text evidence="1">Catalyzes the formation of the alpha-1,6-glucosidic linkages in glycogen by scission of a 1,4-alpha-linked oligosaccharide from growing alpha-1,4-glucan chains and the subsequent attachment of the oligosaccharide to the alpha-1,6 position.</text>
</comment>
<comment type="catalytic activity">
    <reaction evidence="1">
        <text>Transfers a segment of a (1-&gt;4)-alpha-D-glucan chain to a primary hydroxy group in a similar glucan chain.</text>
        <dbReference type="EC" id="2.4.1.18"/>
    </reaction>
</comment>
<comment type="pathway">
    <text evidence="1">Glycan biosynthesis; glycogen biosynthesis.</text>
</comment>
<comment type="subunit">
    <text evidence="1">Monomer.</text>
</comment>
<comment type="similarity">
    <text evidence="1">Belongs to the glycosyl hydrolase 13 family. GlgB subfamily.</text>
</comment>
<accession>Q114I1</accession>
<name>GLGB_TRIEI</name>
<sequence length="776" mass="89966">MTISADQVNQIAWNHHHDPFQVLGSHQIELSGKTMTVIRAYQPSAEAVSVISPIDRKEYPMQSVHNPHFFECVINTPKLANYQLKIKEGEHERVIHDPYAFRSAKLTEFDLQLFGEGNHHRIYEKLGAHITEVDGIKGVYFAVWAPNARNVSILGNFNYWDGRKHQMRKGHTGVWELFIPDIGPGESYKYEVKNWEGHIYEKSDPYGYQQEVRPKTASIVVDLDSYTWNDQEWMEKRRHTDPLTQPISVYECHFGSWIHASAHEPAKLPNGETEPVVQVSELRPDARFLTYRELADRLVSYVKDLGYTHIEMLPVAEHPFDGSWGYQVTGFFAPTSRYGSAQDFMYFVDKCHENGIGVIVDWVPGHFPKDGHGLAFFDGTHLYEHPDPRKGEHKQWGTLVFDYGRNEVRNFLAANALFWFDKYHIDGVRVDAVASMVYHNYMRPDGEWVANKYGGVEYIEAADFLRQVNHLLFSYYPGVLSIAEESTSWPMVTWPTYVGGLGFNFKWNMGWMHDMLDYFEMDPWFRQFHQNNVTFSIWYHHTENYMLALSHDEVVHCKSSILGKMPGDNWQKFANVRALFAYMFTHPGKKTMFMGMELPQWGEWDVWGDLEWHLLEFDAHQGMKRFFRDLNHLYCSEPALYEQDCNEGGFEWIDCNDNNHSVVSFIRRAKDGKDFVVTVCNFTPQPHSHYRVGVPEPGFYTEIFNSDAGNYGGSNMGNLGGKWTDDWFFHDYQQSLDLCLPPLGVVVFQLDKKKTIAMIQESEDVETVEAKAKNAS</sequence>
<gene>
    <name evidence="1" type="primary">glgB</name>
    <name type="ordered locus">Tery_1837</name>
</gene>
<feature type="chain" id="PRO_0000260713" description="1,4-alpha-glucan branching enzyme GlgB">
    <location>
        <begin position="1"/>
        <end position="776"/>
    </location>
</feature>
<feature type="active site" description="Nucleophile" evidence="1">
    <location>
        <position position="431"/>
    </location>
</feature>
<feature type="active site" description="Proton donor" evidence="1">
    <location>
        <position position="484"/>
    </location>
</feature>
<proteinExistence type="inferred from homology"/>
<reference key="1">
    <citation type="journal article" date="2015" name="Proc. Natl. Acad. Sci. U.S.A.">
        <title>Trichodesmium genome maintains abundant, widespread noncoding DNA in situ, despite oligotrophic lifestyle.</title>
        <authorList>
            <person name="Walworth N."/>
            <person name="Pfreundt U."/>
            <person name="Nelson W.C."/>
            <person name="Mincer T."/>
            <person name="Heidelberg J.F."/>
            <person name="Fu F."/>
            <person name="Waterbury J.B."/>
            <person name="Glavina del Rio T."/>
            <person name="Goodwin L."/>
            <person name="Kyrpides N.C."/>
            <person name="Land M.L."/>
            <person name="Woyke T."/>
            <person name="Hutchins D.A."/>
            <person name="Hess W.R."/>
            <person name="Webb E.A."/>
        </authorList>
    </citation>
    <scope>NUCLEOTIDE SEQUENCE [LARGE SCALE GENOMIC DNA]</scope>
    <source>
        <strain>IMS101</strain>
    </source>
</reference>
<keyword id="KW-0119">Carbohydrate metabolism</keyword>
<keyword id="KW-0320">Glycogen biosynthesis</keyword>
<keyword id="KW-0321">Glycogen metabolism</keyword>
<keyword id="KW-0328">Glycosyltransferase</keyword>
<keyword id="KW-0808">Transferase</keyword>
<protein>
    <recommendedName>
        <fullName evidence="1">1,4-alpha-glucan branching enzyme GlgB</fullName>
        <ecNumber evidence="1">2.4.1.18</ecNumber>
    </recommendedName>
    <alternativeName>
        <fullName evidence="1">1,4-alpha-D-glucan:1,4-alpha-D-glucan 6-glucosyl-transferase</fullName>
    </alternativeName>
    <alternativeName>
        <fullName evidence="1">Alpha-(1-&gt;4)-glucan branching enzyme</fullName>
    </alternativeName>
    <alternativeName>
        <fullName evidence="1">Glycogen branching enzyme</fullName>
        <shortName evidence="1">BE</shortName>
    </alternativeName>
</protein>
<dbReference type="EC" id="2.4.1.18" evidence="1"/>
<dbReference type="EMBL" id="CP000393">
    <property type="protein sequence ID" value="ABG51093.1"/>
    <property type="molecule type" value="Genomic_DNA"/>
</dbReference>
<dbReference type="RefSeq" id="WP_011611468.1">
    <property type="nucleotide sequence ID" value="NC_008312.1"/>
</dbReference>
<dbReference type="SMR" id="Q114I1"/>
<dbReference type="STRING" id="203124.Tery_1837"/>
<dbReference type="CAZy" id="CBM48">
    <property type="family name" value="Carbohydrate-Binding Module Family 48"/>
</dbReference>
<dbReference type="CAZy" id="GH13">
    <property type="family name" value="Glycoside Hydrolase Family 13"/>
</dbReference>
<dbReference type="KEGG" id="ter:Tery_1837"/>
<dbReference type="eggNOG" id="COG0296">
    <property type="taxonomic scope" value="Bacteria"/>
</dbReference>
<dbReference type="HOGENOM" id="CLU_004245_3_2_3"/>
<dbReference type="OrthoDB" id="9800174at2"/>
<dbReference type="UniPathway" id="UPA00164"/>
<dbReference type="GO" id="GO:0005829">
    <property type="term" value="C:cytosol"/>
    <property type="evidence" value="ECO:0007669"/>
    <property type="project" value="TreeGrafter"/>
</dbReference>
<dbReference type="GO" id="GO:0003844">
    <property type="term" value="F:1,4-alpha-glucan branching enzyme activity"/>
    <property type="evidence" value="ECO:0007669"/>
    <property type="project" value="UniProtKB-UniRule"/>
</dbReference>
<dbReference type="GO" id="GO:0043169">
    <property type="term" value="F:cation binding"/>
    <property type="evidence" value="ECO:0007669"/>
    <property type="project" value="InterPro"/>
</dbReference>
<dbReference type="GO" id="GO:0004553">
    <property type="term" value="F:hydrolase activity, hydrolyzing O-glycosyl compounds"/>
    <property type="evidence" value="ECO:0007669"/>
    <property type="project" value="InterPro"/>
</dbReference>
<dbReference type="GO" id="GO:0005978">
    <property type="term" value="P:glycogen biosynthetic process"/>
    <property type="evidence" value="ECO:0007669"/>
    <property type="project" value="UniProtKB-UniRule"/>
</dbReference>
<dbReference type="CDD" id="cd11322">
    <property type="entry name" value="AmyAc_Glg_BE"/>
    <property type="match status" value="1"/>
</dbReference>
<dbReference type="CDD" id="cd02855">
    <property type="entry name" value="E_set_GBE_prok_N"/>
    <property type="match status" value="1"/>
</dbReference>
<dbReference type="FunFam" id="2.60.40.10:FF:000169">
    <property type="entry name" value="1,4-alpha-glucan branching enzyme GlgB"/>
    <property type="match status" value="1"/>
</dbReference>
<dbReference type="FunFam" id="2.60.40.1180:FF:000002">
    <property type="entry name" value="1,4-alpha-glucan branching enzyme GlgB"/>
    <property type="match status" value="1"/>
</dbReference>
<dbReference type="FunFam" id="3.20.20.80:FF:000003">
    <property type="entry name" value="1,4-alpha-glucan branching enzyme GlgB"/>
    <property type="match status" value="1"/>
</dbReference>
<dbReference type="Gene3D" id="3.20.20.80">
    <property type="entry name" value="Glycosidases"/>
    <property type="match status" value="1"/>
</dbReference>
<dbReference type="Gene3D" id="2.60.40.1180">
    <property type="entry name" value="Golgi alpha-mannosidase II"/>
    <property type="match status" value="1"/>
</dbReference>
<dbReference type="Gene3D" id="2.60.40.10">
    <property type="entry name" value="Immunoglobulins"/>
    <property type="match status" value="2"/>
</dbReference>
<dbReference type="HAMAP" id="MF_00685">
    <property type="entry name" value="GlgB"/>
    <property type="match status" value="1"/>
</dbReference>
<dbReference type="InterPro" id="IPR006048">
    <property type="entry name" value="A-amylase/branching_C"/>
</dbReference>
<dbReference type="InterPro" id="IPR037439">
    <property type="entry name" value="Branching_enzy"/>
</dbReference>
<dbReference type="InterPro" id="IPR006407">
    <property type="entry name" value="GlgB"/>
</dbReference>
<dbReference type="InterPro" id="IPR054169">
    <property type="entry name" value="GlgB_N"/>
</dbReference>
<dbReference type="InterPro" id="IPR044143">
    <property type="entry name" value="GlgB_N_E_set_prok"/>
</dbReference>
<dbReference type="InterPro" id="IPR006047">
    <property type="entry name" value="Glyco_hydro_13_cat_dom"/>
</dbReference>
<dbReference type="InterPro" id="IPR004193">
    <property type="entry name" value="Glyco_hydro_13_N"/>
</dbReference>
<dbReference type="InterPro" id="IPR013780">
    <property type="entry name" value="Glyco_hydro_b"/>
</dbReference>
<dbReference type="InterPro" id="IPR017853">
    <property type="entry name" value="Glycoside_hydrolase_SF"/>
</dbReference>
<dbReference type="InterPro" id="IPR013783">
    <property type="entry name" value="Ig-like_fold"/>
</dbReference>
<dbReference type="InterPro" id="IPR014756">
    <property type="entry name" value="Ig_E-set"/>
</dbReference>
<dbReference type="NCBIfam" id="TIGR01515">
    <property type="entry name" value="branching_enzym"/>
    <property type="match status" value="1"/>
</dbReference>
<dbReference type="NCBIfam" id="NF003811">
    <property type="entry name" value="PRK05402.1"/>
    <property type="match status" value="1"/>
</dbReference>
<dbReference type="NCBIfam" id="NF008967">
    <property type="entry name" value="PRK12313.1"/>
    <property type="match status" value="1"/>
</dbReference>
<dbReference type="PANTHER" id="PTHR43651">
    <property type="entry name" value="1,4-ALPHA-GLUCAN-BRANCHING ENZYME"/>
    <property type="match status" value="1"/>
</dbReference>
<dbReference type="PANTHER" id="PTHR43651:SF3">
    <property type="entry name" value="1,4-ALPHA-GLUCAN-BRANCHING ENZYME"/>
    <property type="match status" value="1"/>
</dbReference>
<dbReference type="Pfam" id="PF00128">
    <property type="entry name" value="Alpha-amylase"/>
    <property type="match status" value="2"/>
</dbReference>
<dbReference type="Pfam" id="PF02806">
    <property type="entry name" value="Alpha-amylase_C"/>
    <property type="match status" value="1"/>
</dbReference>
<dbReference type="Pfam" id="PF02922">
    <property type="entry name" value="CBM_48"/>
    <property type="match status" value="1"/>
</dbReference>
<dbReference type="Pfam" id="PF22019">
    <property type="entry name" value="GlgB_N"/>
    <property type="match status" value="1"/>
</dbReference>
<dbReference type="PIRSF" id="PIRSF000463">
    <property type="entry name" value="GlgB"/>
    <property type="match status" value="1"/>
</dbReference>
<dbReference type="SMART" id="SM00642">
    <property type="entry name" value="Aamy"/>
    <property type="match status" value="1"/>
</dbReference>
<dbReference type="SUPFAM" id="SSF51445">
    <property type="entry name" value="(Trans)glycosidases"/>
    <property type="match status" value="1"/>
</dbReference>
<dbReference type="SUPFAM" id="SSF81296">
    <property type="entry name" value="E set domains"/>
    <property type="match status" value="2"/>
</dbReference>
<dbReference type="SUPFAM" id="SSF51011">
    <property type="entry name" value="Glycosyl hydrolase domain"/>
    <property type="match status" value="1"/>
</dbReference>
<organism>
    <name type="scientific">Trichodesmium erythraeum (strain IMS101)</name>
    <dbReference type="NCBI Taxonomy" id="203124"/>
    <lineage>
        <taxon>Bacteria</taxon>
        <taxon>Bacillati</taxon>
        <taxon>Cyanobacteriota</taxon>
        <taxon>Cyanophyceae</taxon>
        <taxon>Oscillatoriophycideae</taxon>
        <taxon>Oscillatoriales</taxon>
        <taxon>Microcoleaceae</taxon>
        <taxon>Trichodesmium</taxon>
    </lineage>
</organism>